<sequence>MSITAKSVYRDTGNFFRNQLVTILLIALLCAFISMMLGHAFTPNADQLAILSEGDAMTNSASLFELVQNMTPEQQQVLLKASAASTFSGMFGNTLLVGGVLVLIQAVSAGQNVSALRAIGASAPLLPRLFILIFLTTFLVQMGILLVVVPGVILAIVLSLAPVMMAQDKAGIFRAMRNSMRLAWRNMRLVAPAVLLWLLARAALLLFAPAFAALTPQIGAVVAGTLSNLLTALLLIYLFRLYMLIRE</sequence>
<dbReference type="EMBL" id="CP000783">
    <property type="protein sequence ID" value="ABU76808.1"/>
    <property type="molecule type" value="Genomic_DNA"/>
</dbReference>
<dbReference type="RefSeq" id="WP_012124562.1">
    <property type="nucleotide sequence ID" value="NC_009778.1"/>
</dbReference>
<dbReference type="KEGG" id="esa:ESA_01554"/>
<dbReference type="PATRIC" id="fig|290339.8.peg.1382"/>
<dbReference type="HOGENOM" id="CLU_073287_0_0_6"/>
<dbReference type="Proteomes" id="UP000000260">
    <property type="component" value="Chromosome"/>
</dbReference>
<dbReference type="GO" id="GO:0005886">
    <property type="term" value="C:plasma membrane"/>
    <property type="evidence" value="ECO:0007669"/>
    <property type="project" value="UniProtKB-SubCell"/>
</dbReference>
<dbReference type="HAMAP" id="MF_01067">
    <property type="entry name" value="UPF0259"/>
    <property type="match status" value="1"/>
</dbReference>
<dbReference type="InterPro" id="IPR009627">
    <property type="entry name" value="UPF0259"/>
</dbReference>
<dbReference type="NCBIfam" id="NF002774">
    <property type="entry name" value="PRK02868.1"/>
    <property type="match status" value="1"/>
</dbReference>
<dbReference type="Pfam" id="PF06790">
    <property type="entry name" value="UPF0259"/>
    <property type="match status" value="1"/>
</dbReference>
<evidence type="ECO:0000255" key="1">
    <source>
        <dbReference type="HAMAP-Rule" id="MF_01067"/>
    </source>
</evidence>
<protein>
    <recommendedName>
        <fullName evidence="1">UPF0259 membrane protein ESA_01554</fullName>
    </recommendedName>
</protein>
<organism>
    <name type="scientific">Cronobacter sakazakii (strain ATCC BAA-894)</name>
    <name type="common">Enterobacter sakazakii</name>
    <dbReference type="NCBI Taxonomy" id="290339"/>
    <lineage>
        <taxon>Bacteria</taxon>
        <taxon>Pseudomonadati</taxon>
        <taxon>Pseudomonadota</taxon>
        <taxon>Gammaproteobacteria</taxon>
        <taxon>Enterobacterales</taxon>
        <taxon>Enterobacteriaceae</taxon>
        <taxon>Cronobacter</taxon>
    </lineage>
</organism>
<keyword id="KW-0997">Cell inner membrane</keyword>
<keyword id="KW-1003">Cell membrane</keyword>
<keyword id="KW-0472">Membrane</keyword>
<keyword id="KW-1185">Reference proteome</keyword>
<keyword id="KW-0812">Transmembrane</keyword>
<keyword id="KW-1133">Transmembrane helix</keyword>
<proteinExistence type="inferred from homology"/>
<accession>A7MMH2</accession>
<reference key="1">
    <citation type="journal article" date="2010" name="PLoS ONE">
        <title>Genome sequence of Cronobacter sakazakii BAA-894 and comparative genomic hybridization analysis with other Cronobacter species.</title>
        <authorList>
            <person name="Kucerova E."/>
            <person name="Clifton S.W."/>
            <person name="Xia X.Q."/>
            <person name="Long F."/>
            <person name="Porwollik S."/>
            <person name="Fulton L."/>
            <person name="Fronick C."/>
            <person name="Minx P."/>
            <person name="Kyung K."/>
            <person name="Warren W."/>
            <person name="Fulton R."/>
            <person name="Feng D."/>
            <person name="Wollam A."/>
            <person name="Shah N."/>
            <person name="Bhonagiri V."/>
            <person name="Nash W.E."/>
            <person name="Hallsworth-Pepin K."/>
            <person name="Wilson R.K."/>
            <person name="McClelland M."/>
            <person name="Forsythe S.J."/>
        </authorList>
    </citation>
    <scope>NUCLEOTIDE SEQUENCE [LARGE SCALE GENOMIC DNA]</scope>
    <source>
        <strain>ATCC BAA-894</strain>
    </source>
</reference>
<gene>
    <name type="ordered locus">ESA_01554</name>
</gene>
<comment type="subcellular location">
    <subcellularLocation>
        <location evidence="1">Cell inner membrane</location>
        <topology evidence="1">Multi-pass membrane protein</topology>
    </subcellularLocation>
</comment>
<comment type="similarity">
    <text evidence="1">Belongs to the UPF0259 family.</text>
</comment>
<name>Y1554_CROS8</name>
<feature type="chain" id="PRO_1000064526" description="UPF0259 membrane protein ESA_01554">
    <location>
        <begin position="1"/>
        <end position="247"/>
    </location>
</feature>
<feature type="transmembrane region" description="Helical" evidence="1">
    <location>
        <begin position="21"/>
        <end position="41"/>
    </location>
</feature>
<feature type="transmembrane region" description="Helical" evidence="1">
    <location>
        <begin position="87"/>
        <end position="107"/>
    </location>
</feature>
<feature type="transmembrane region" description="Helical" evidence="1">
    <location>
        <begin position="115"/>
        <end position="135"/>
    </location>
</feature>
<feature type="transmembrane region" description="Helical" evidence="1">
    <location>
        <begin position="138"/>
        <end position="158"/>
    </location>
</feature>
<feature type="transmembrane region" description="Helical" evidence="1">
    <location>
        <begin position="194"/>
        <end position="214"/>
    </location>
</feature>
<feature type="transmembrane region" description="Helical" evidence="1">
    <location>
        <begin position="218"/>
        <end position="238"/>
    </location>
</feature>